<comment type="function">
    <text evidence="1">Catalyzes the conversion of 1-hydroxy-2-methyl-2-(E)-butenyl 4-diphosphate (HMBPP) into a mixture of isopentenyl diphosphate (IPP) and dimethylallyl diphosphate (DMAPP). Acts in the terminal step of the DOXP/MEP pathway for isoprenoid precursor biosynthesis.</text>
</comment>
<comment type="catalytic activity">
    <reaction evidence="1">
        <text>isopentenyl diphosphate + 2 oxidized [2Fe-2S]-[ferredoxin] + H2O = (2E)-4-hydroxy-3-methylbut-2-enyl diphosphate + 2 reduced [2Fe-2S]-[ferredoxin] + 2 H(+)</text>
        <dbReference type="Rhea" id="RHEA:24488"/>
        <dbReference type="Rhea" id="RHEA-COMP:10000"/>
        <dbReference type="Rhea" id="RHEA-COMP:10001"/>
        <dbReference type="ChEBI" id="CHEBI:15377"/>
        <dbReference type="ChEBI" id="CHEBI:15378"/>
        <dbReference type="ChEBI" id="CHEBI:33737"/>
        <dbReference type="ChEBI" id="CHEBI:33738"/>
        <dbReference type="ChEBI" id="CHEBI:128753"/>
        <dbReference type="ChEBI" id="CHEBI:128769"/>
        <dbReference type="EC" id="1.17.7.4"/>
    </reaction>
</comment>
<comment type="catalytic activity">
    <reaction evidence="1">
        <text>dimethylallyl diphosphate + 2 oxidized [2Fe-2S]-[ferredoxin] + H2O = (2E)-4-hydroxy-3-methylbut-2-enyl diphosphate + 2 reduced [2Fe-2S]-[ferredoxin] + 2 H(+)</text>
        <dbReference type="Rhea" id="RHEA:24825"/>
        <dbReference type="Rhea" id="RHEA-COMP:10000"/>
        <dbReference type="Rhea" id="RHEA-COMP:10001"/>
        <dbReference type="ChEBI" id="CHEBI:15377"/>
        <dbReference type="ChEBI" id="CHEBI:15378"/>
        <dbReference type="ChEBI" id="CHEBI:33737"/>
        <dbReference type="ChEBI" id="CHEBI:33738"/>
        <dbReference type="ChEBI" id="CHEBI:57623"/>
        <dbReference type="ChEBI" id="CHEBI:128753"/>
        <dbReference type="EC" id="1.17.7.4"/>
    </reaction>
</comment>
<comment type="cofactor">
    <cofactor evidence="1">
        <name>[4Fe-4S] cluster</name>
        <dbReference type="ChEBI" id="CHEBI:49883"/>
    </cofactor>
    <text evidence="1">Binds 1 [4Fe-4S] cluster per subunit.</text>
</comment>
<comment type="pathway">
    <text evidence="1">Isoprenoid biosynthesis; dimethylallyl diphosphate biosynthesis; dimethylallyl diphosphate from (2E)-4-hydroxy-3-methylbutenyl diphosphate: step 1/1.</text>
</comment>
<comment type="pathway">
    <text evidence="1">Isoprenoid biosynthesis; isopentenyl diphosphate biosynthesis via DXP pathway; isopentenyl diphosphate from 1-deoxy-D-xylulose 5-phosphate: step 6/6.</text>
</comment>
<comment type="similarity">
    <text evidence="1">Belongs to the IspH family.</text>
</comment>
<organism>
    <name type="scientific">Desulfovibrio desulfuricans (strain ATCC 27774 / DSM 6949 / MB)</name>
    <dbReference type="NCBI Taxonomy" id="525146"/>
    <lineage>
        <taxon>Bacteria</taxon>
        <taxon>Pseudomonadati</taxon>
        <taxon>Thermodesulfobacteriota</taxon>
        <taxon>Desulfovibrionia</taxon>
        <taxon>Desulfovibrionales</taxon>
        <taxon>Desulfovibrionaceae</taxon>
        <taxon>Desulfovibrio</taxon>
    </lineage>
</organism>
<dbReference type="EC" id="1.17.7.4" evidence="1"/>
<dbReference type="EMBL" id="CP001358">
    <property type="protein sequence ID" value="ACL49979.1"/>
    <property type="molecule type" value="Genomic_DNA"/>
</dbReference>
<dbReference type="SMR" id="B8J3G9"/>
<dbReference type="STRING" id="525146.Ddes_2083"/>
<dbReference type="KEGG" id="dds:Ddes_2083"/>
<dbReference type="eggNOG" id="COG0761">
    <property type="taxonomic scope" value="Bacteria"/>
</dbReference>
<dbReference type="HOGENOM" id="CLU_027486_0_1_7"/>
<dbReference type="UniPathway" id="UPA00056">
    <property type="reaction ID" value="UER00097"/>
</dbReference>
<dbReference type="UniPathway" id="UPA00059">
    <property type="reaction ID" value="UER00105"/>
</dbReference>
<dbReference type="GO" id="GO:0051539">
    <property type="term" value="F:4 iron, 4 sulfur cluster binding"/>
    <property type="evidence" value="ECO:0007669"/>
    <property type="project" value="UniProtKB-UniRule"/>
</dbReference>
<dbReference type="GO" id="GO:0051745">
    <property type="term" value="F:4-hydroxy-3-methylbut-2-enyl diphosphate reductase activity"/>
    <property type="evidence" value="ECO:0007669"/>
    <property type="project" value="UniProtKB-UniRule"/>
</dbReference>
<dbReference type="GO" id="GO:0046872">
    <property type="term" value="F:metal ion binding"/>
    <property type="evidence" value="ECO:0007669"/>
    <property type="project" value="UniProtKB-KW"/>
</dbReference>
<dbReference type="GO" id="GO:0050992">
    <property type="term" value="P:dimethylallyl diphosphate biosynthetic process"/>
    <property type="evidence" value="ECO:0007669"/>
    <property type="project" value="UniProtKB-UniRule"/>
</dbReference>
<dbReference type="GO" id="GO:0019288">
    <property type="term" value="P:isopentenyl diphosphate biosynthetic process, methylerythritol 4-phosphate pathway"/>
    <property type="evidence" value="ECO:0007669"/>
    <property type="project" value="UniProtKB-UniRule"/>
</dbReference>
<dbReference type="GO" id="GO:0016114">
    <property type="term" value="P:terpenoid biosynthetic process"/>
    <property type="evidence" value="ECO:0007669"/>
    <property type="project" value="UniProtKB-UniRule"/>
</dbReference>
<dbReference type="CDD" id="cd13944">
    <property type="entry name" value="lytB_ispH"/>
    <property type="match status" value="1"/>
</dbReference>
<dbReference type="Gene3D" id="3.40.50.11270">
    <property type="match status" value="1"/>
</dbReference>
<dbReference type="Gene3D" id="3.40.1010.20">
    <property type="entry name" value="4-hydroxy-3-methylbut-2-enyl diphosphate reductase, catalytic domain"/>
    <property type="match status" value="2"/>
</dbReference>
<dbReference type="HAMAP" id="MF_00191">
    <property type="entry name" value="IspH"/>
    <property type="match status" value="1"/>
</dbReference>
<dbReference type="InterPro" id="IPR003451">
    <property type="entry name" value="LytB/IspH"/>
</dbReference>
<dbReference type="NCBIfam" id="TIGR00216">
    <property type="entry name" value="ispH_lytB"/>
    <property type="match status" value="1"/>
</dbReference>
<dbReference type="PANTHER" id="PTHR30426">
    <property type="entry name" value="4-HYDROXY-3-METHYLBUT-2-ENYL DIPHOSPHATE REDUCTASE"/>
    <property type="match status" value="1"/>
</dbReference>
<dbReference type="PANTHER" id="PTHR30426:SF0">
    <property type="entry name" value="4-HYDROXY-3-METHYLBUT-2-ENYL DIPHOSPHATE REDUCTASE"/>
    <property type="match status" value="1"/>
</dbReference>
<dbReference type="Pfam" id="PF02401">
    <property type="entry name" value="LYTB"/>
    <property type="match status" value="1"/>
</dbReference>
<reference key="1">
    <citation type="submission" date="2009-01" db="EMBL/GenBank/DDBJ databases">
        <title>Complete sequence of Desulfovibrio desulfuricans subsp. desulfuricans str. ATCC 27774.</title>
        <authorList>
            <consortium name="US DOE Joint Genome Institute"/>
            <person name="Lucas S."/>
            <person name="Copeland A."/>
            <person name="Lapidus A."/>
            <person name="Glavina del Rio T."/>
            <person name="Tice H."/>
            <person name="Bruce D."/>
            <person name="Goodwin L."/>
            <person name="Pitluck S."/>
            <person name="Sims D."/>
            <person name="Lu M."/>
            <person name="Kiss H."/>
            <person name="Meineke L."/>
            <person name="Brettin T."/>
            <person name="Detter J.C."/>
            <person name="Han C."/>
            <person name="Larimer F."/>
            <person name="Land M."/>
            <person name="Hauser L."/>
            <person name="Kyrpides N."/>
            <person name="Ovchinnikova G."/>
            <person name="Hazen T.C."/>
        </authorList>
    </citation>
    <scope>NUCLEOTIDE SEQUENCE [LARGE SCALE GENOMIC DNA]</scope>
    <source>
        <strain>ATCC 27774 / DSM 6949 / MB</strain>
    </source>
</reference>
<proteinExistence type="inferred from homology"/>
<evidence type="ECO:0000255" key="1">
    <source>
        <dbReference type="HAMAP-Rule" id="MF_00191"/>
    </source>
</evidence>
<name>ISPH_DESDA</name>
<accession>B8J3G9</accession>
<sequence>MNVRRAKTAGFCMGVSLALQKLNTALERRAGQSAGAGRICTLGPIIHNPQVLAEYETRGVVCVNDPAQLRQDDVAVIRAHGITRQVEQAVCASGATVVDATCPKVKKAQLSIARATSQGATLLLFGEEDHPEVRGLISYACGPAHVFGNAVELAALPLDPAQPYVLASQTTQDREIFTSIQESLSRALDDLTILSTICDATRERQEEARNIASSVDVMVVVGGRQSGNTRRLADVAALNGIATYHVESAEELEPKNFANKPRVGLTAGASTPKSLIDAAEKWLSSL</sequence>
<keyword id="KW-0004">4Fe-4S</keyword>
<keyword id="KW-0408">Iron</keyword>
<keyword id="KW-0411">Iron-sulfur</keyword>
<keyword id="KW-0414">Isoprene biosynthesis</keyword>
<keyword id="KW-0479">Metal-binding</keyword>
<keyword id="KW-0560">Oxidoreductase</keyword>
<gene>
    <name evidence="1" type="primary">ispH</name>
    <name type="ordered locus">Ddes_2083</name>
</gene>
<protein>
    <recommendedName>
        <fullName evidence="1">4-hydroxy-3-methylbut-2-enyl diphosphate reductase</fullName>
        <shortName evidence="1">HMBPP reductase</shortName>
        <ecNumber evidence="1">1.17.7.4</ecNumber>
    </recommendedName>
</protein>
<feature type="chain" id="PRO_1000124282" description="4-hydroxy-3-methylbut-2-enyl diphosphate reductase">
    <location>
        <begin position="1"/>
        <end position="286"/>
    </location>
</feature>
<feature type="active site" description="Proton donor" evidence="1">
    <location>
        <position position="132"/>
    </location>
</feature>
<feature type="binding site" evidence="1">
    <location>
        <position position="12"/>
    </location>
    <ligand>
        <name>[4Fe-4S] cluster</name>
        <dbReference type="ChEBI" id="CHEBI:49883"/>
    </ligand>
</feature>
<feature type="binding site" evidence="1">
    <location>
        <position position="47"/>
    </location>
    <ligand>
        <name>(2E)-4-hydroxy-3-methylbut-2-enyl diphosphate</name>
        <dbReference type="ChEBI" id="CHEBI:128753"/>
    </ligand>
</feature>
<feature type="binding site" evidence="1">
    <location>
        <position position="47"/>
    </location>
    <ligand>
        <name>dimethylallyl diphosphate</name>
        <dbReference type="ChEBI" id="CHEBI:57623"/>
    </ligand>
</feature>
<feature type="binding site" evidence="1">
    <location>
        <position position="47"/>
    </location>
    <ligand>
        <name>isopentenyl diphosphate</name>
        <dbReference type="ChEBI" id="CHEBI:128769"/>
    </ligand>
</feature>
<feature type="binding site" evidence="1">
    <location>
        <position position="80"/>
    </location>
    <ligand>
        <name>(2E)-4-hydroxy-3-methylbut-2-enyl diphosphate</name>
        <dbReference type="ChEBI" id="CHEBI:128753"/>
    </ligand>
</feature>
<feature type="binding site" evidence="1">
    <location>
        <position position="80"/>
    </location>
    <ligand>
        <name>dimethylallyl diphosphate</name>
        <dbReference type="ChEBI" id="CHEBI:57623"/>
    </ligand>
</feature>
<feature type="binding site" evidence="1">
    <location>
        <position position="80"/>
    </location>
    <ligand>
        <name>isopentenyl diphosphate</name>
        <dbReference type="ChEBI" id="CHEBI:128769"/>
    </ligand>
</feature>
<feature type="binding site" evidence="1">
    <location>
        <position position="102"/>
    </location>
    <ligand>
        <name>[4Fe-4S] cluster</name>
        <dbReference type="ChEBI" id="CHEBI:49883"/>
    </ligand>
</feature>
<feature type="binding site" evidence="1">
    <location>
        <position position="130"/>
    </location>
    <ligand>
        <name>(2E)-4-hydroxy-3-methylbut-2-enyl diphosphate</name>
        <dbReference type="ChEBI" id="CHEBI:128753"/>
    </ligand>
</feature>
<feature type="binding site" evidence="1">
    <location>
        <position position="130"/>
    </location>
    <ligand>
        <name>dimethylallyl diphosphate</name>
        <dbReference type="ChEBI" id="CHEBI:57623"/>
    </ligand>
</feature>
<feature type="binding site" evidence="1">
    <location>
        <position position="130"/>
    </location>
    <ligand>
        <name>isopentenyl diphosphate</name>
        <dbReference type="ChEBI" id="CHEBI:128769"/>
    </ligand>
</feature>
<feature type="binding site" evidence="1">
    <location>
        <position position="170"/>
    </location>
    <ligand>
        <name>(2E)-4-hydroxy-3-methylbut-2-enyl diphosphate</name>
        <dbReference type="ChEBI" id="CHEBI:128753"/>
    </ligand>
</feature>
<feature type="binding site" evidence="1">
    <location>
        <position position="198"/>
    </location>
    <ligand>
        <name>[4Fe-4S] cluster</name>
        <dbReference type="ChEBI" id="CHEBI:49883"/>
    </ligand>
</feature>
<feature type="binding site" evidence="1">
    <location>
        <position position="226"/>
    </location>
    <ligand>
        <name>(2E)-4-hydroxy-3-methylbut-2-enyl diphosphate</name>
        <dbReference type="ChEBI" id="CHEBI:128753"/>
    </ligand>
</feature>
<feature type="binding site" evidence="1">
    <location>
        <position position="226"/>
    </location>
    <ligand>
        <name>dimethylallyl diphosphate</name>
        <dbReference type="ChEBI" id="CHEBI:57623"/>
    </ligand>
</feature>
<feature type="binding site" evidence="1">
    <location>
        <position position="226"/>
    </location>
    <ligand>
        <name>isopentenyl diphosphate</name>
        <dbReference type="ChEBI" id="CHEBI:128769"/>
    </ligand>
</feature>
<feature type="binding site" evidence="1">
    <location>
        <position position="228"/>
    </location>
    <ligand>
        <name>(2E)-4-hydroxy-3-methylbut-2-enyl diphosphate</name>
        <dbReference type="ChEBI" id="CHEBI:128753"/>
    </ligand>
</feature>
<feature type="binding site" evidence="1">
    <location>
        <position position="228"/>
    </location>
    <ligand>
        <name>dimethylallyl diphosphate</name>
        <dbReference type="ChEBI" id="CHEBI:57623"/>
    </ligand>
</feature>
<feature type="binding site" evidence="1">
    <location>
        <position position="228"/>
    </location>
    <ligand>
        <name>isopentenyl diphosphate</name>
        <dbReference type="ChEBI" id="CHEBI:128769"/>
    </ligand>
</feature>
<feature type="binding site" evidence="1">
    <location>
        <position position="270"/>
    </location>
    <ligand>
        <name>(2E)-4-hydroxy-3-methylbut-2-enyl diphosphate</name>
        <dbReference type="ChEBI" id="CHEBI:128753"/>
    </ligand>
</feature>
<feature type="binding site" evidence="1">
    <location>
        <position position="270"/>
    </location>
    <ligand>
        <name>dimethylallyl diphosphate</name>
        <dbReference type="ChEBI" id="CHEBI:57623"/>
    </ligand>
</feature>
<feature type="binding site" evidence="1">
    <location>
        <position position="270"/>
    </location>
    <ligand>
        <name>isopentenyl diphosphate</name>
        <dbReference type="ChEBI" id="CHEBI:128769"/>
    </ligand>
</feature>